<dbReference type="EMBL" id="M23694">
    <property type="protein sequence ID" value="AAA43064.1"/>
    <property type="molecule type" value="mRNA"/>
</dbReference>
<dbReference type="EMBL" id="DQ010921">
    <property type="status" value="NOT_ANNOTATED_CDS"/>
    <property type="molecule type" value="Genomic_RNA"/>
</dbReference>
<dbReference type="EMBL" id="AY994055">
    <property type="protein sequence ID" value="AAY16382.1"/>
    <property type="molecule type" value="Genomic_RNA"/>
</dbReference>
<dbReference type="PIR" id="B31825">
    <property type="entry name" value="QQIHFI"/>
</dbReference>
<dbReference type="KEGG" id="vg:10040188"/>
<dbReference type="Proteomes" id="UP000000835">
    <property type="component" value="Segment"/>
</dbReference>
<dbReference type="Proteomes" id="UP000140386">
    <property type="component" value="Genome"/>
</dbReference>
<dbReference type="InterPro" id="IPR004945">
    <property type="entry name" value="Corona_6B_7B"/>
</dbReference>
<dbReference type="Pfam" id="PF03262">
    <property type="entry name" value="Corona_6B_7B"/>
    <property type="match status" value="1"/>
</dbReference>
<feature type="signal peptide" evidence="1">
    <location>
        <begin position="1"/>
        <end position="17"/>
    </location>
</feature>
<feature type="chain" id="PRO_0000106104" description="Non-structural protein 7b">
    <location>
        <begin position="18"/>
        <end position="206"/>
    </location>
</feature>
<sequence>MIVVILVCIFLANGIKATAVQNDLHEHPVLTWDLLQHFIGHTLYITTHQVLALPLGSRVECEGIEGFNCTWPGFQDPAHDHIDFYFDLSNPFYSFVDNFYIVSEGNQRINLRLVGAVPKQKRLNVGCHTSFAVDLPFGIQIYHDRDFQHPVDGRHLDCTHRVYFVKYCPHNLHGYCFNERLKVYDLKQFRSKKVFDKINQHHKTEL</sequence>
<gene>
    <name type="ORF">7b</name>
</gene>
<protein>
    <recommendedName>
        <fullName>Non-structural protein 7b</fullName>
        <shortName>ns7b</shortName>
    </recommendedName>
    <alternativeName>
        <fullName>Accessory protein 7b</fullName>
    </alternativeName>
</protein>
<reference key="1">
    <citation type="journal article" date="1988" name="Virology">
        <title>Sequence analysis of the 3'-end of the feline coronavirus FIPV 79-1146 genome: comparison with the genome of porcine coronavirus TGEV reveals large insertions.</title>
        <authorList>
            <person name="de Groot R.J."/>
            <person name="Andeweg A.C."/>
            <person name="Horzinek M.C."/>
            <person name="Spaan W.J.M."/>
        </authorList>
    </citation>
    <scope>NUCLEOTIDE SEQUENCE [MRNA]</scope>
</reference>
<reference key="2">
    <citation type="journal article" date="2005" name="J. Gen. Virol.">
        <title>Genomic RNA sequence of Feline coronavirus strain FIPV WSU-79/1146.</title>
        <authorList>
            <person name="Dye C."/>
            <person name="Siddell S.G."/>
        </authorList>
    </citation>
    <scope>NUCLEOTIDE SEQUENCE [GENOMIC RNA]</scope>
</reference>
<reference key="3">
    <citation type="submission" date="2005-03" db="EMBL/GenBank/DDBJ databases">
        <authorList>
            <person name="Haijema B.J."/>
            <person name="de Groot-Mijnes J.D.F."/>
            <person name="Vennema H."/>
            <person name="Raamsman M.J."/>
            <person name="Rottier P.J.M."/>
            <person name="de Groot R.J."/>
        </authorList>
    </citation>
    <scope>NUCLEOTIDE SEQUENCE [GENOMIC RNA]</scope>
</reference>
<evidence type="ECO:0000255" key="1"/>
<evidence type="ECO:0000305" key="2"/>
<name>NS7B_FIPV</name>
<comment type="sequence caution" evidence="2">
    <conflict type="miscellaneous discrepancy">
        <sequence resource="EMBL" id="DQ010921"/>
    </conflict>
    <text>The submitted sequence has a stop codon in position 49, but this could be due to a sequencing error or to the presence of quasispecies mutations.</text>
</comment>
<accession>P19743</accession>
<accession>Q52PA9</accession>
<organism>
    <name type="scientific">Feline coronavirus (strain FIPV WSU-79/1146)</name>
    <name type="common">FCoV</name>
    <dbReference type="NCBI Taxonomy" id="33734"/>
    <lineage>
        <taxon>Viruses</taxon>
        <taxon>Riboviria</taxon>
        <taxon>Orthornavirae</taxon>
        <taxon>Pisuviricota</taxon>
        <taxon>Pisoniviricetes</taxon>
        <taxon>Nidovirales</taxon>
        <taxon>Cornidovirineae</taxon>
        <taxon>Coronaviridae</taxon>
        <taxon>Orthocoronavirinae</taxon>
        <taxon>Alphacoronavirus</taxon>
        <taxon>Tegacovirus</taxon>
        <taxon>Alphacoronavirus 1</taxon>
    </lineage>
</organism>
<organismHost>
    <name type="scientific">Felidae</name>
    <name type="common">cat family</name>
    <dbReference type="NCBI Taxonomy" id="9681"/>
</organismHost>
<keyword id="KW-1185">Reference proteome</keyword>
<keyword id="KW-0732">Signal</keyword>
<proteinExistence type="evidence at transcript level"/>